<proteinExistence type="inferred from homology"/>
<comment type="function">
    <text evidence="1">Specifically methylates the N7 position of a guanine in 16S rRNA.</text>
</comment>
<comment type="subcellular location">
    <subcellularLocation>
        <location evidence="1">Cytoplasm</location>
    </subcellularLocation>
</comment>
<comment type="similarity">
    <text evidence="1">Belongs to the methyltransferase superfamily. RNA methyltransferase RsmG family.</text>
</comment>
<protein>
    <recommendedName>
        <fullName evidence="1">Ribosomal RNA small subunit methyltransferase G</fullName>
        <ecNumber evidence="1">2.1.1.-</ecNumber>
    </recommendedName>
    <alternativeName>
        <fullName evidence="1">16S rRNA 7-methylguanosine methyltransferase</fullName>
        <shortName evidence="1">16S rRNA m7G methyltransferase</shortName>
    </alternativeName>
</protein>
<reference key="1">
    <citation type="journal article" date="2006" name="Proc. Natl. Acad. Sci. U.S.A.">
        <title>Multireplicon genome architecture of Lactobacillus salivarius.</title>
        <authorList>
            <person name="Claesson M.J."/>
            <person name="Li Y."/>
            <person name="Leahy S."/>
            <person name="Canchaya C."/>
            <person name="van Pijkeren J.P."/>
            <person name="Cerdeno-Tarraga A.M."/>
            <person name="Parkhill J."/>
            <person name="Flynn S."/>
            <person name="O'Sullivan G.C."/>
            <person name="Collins J.K."/>
            <person name="Higgins D."/>
            <person name="Shanahan F."/>
            <person name="Fitzgerald G.F."/>
            <person name="van Sinderen D."/>
            <person name="O'Toole P.W."/>
        </authorList>
    </citation>
    <scope>NUCLEOTIDE SEQUENCE [LARGE SCALE GENOMIC DNA]</scope>
    <source>
        <strain>UCC118</strain>
    </source>
</reference>
<organism>
    <name type="scientific">Ligilactobacillus salivarius (strain UCC118)</name>
    <name type="common">Lactobacillus salivarius</name>
    <dbReference type="NCBI Taxonomy" id="362948"/>
    <lineage>
        <taxon>Bacteria</taxon>
        <taxon>Bacillati</taxon>
        <taxon>Bacillota</taxon>
        <taxon>Bacilli</taxon>
        <taxon>Lactobacillales</taxon>
        <taxon>Lactobacillaceae</taxon>
        <taxon>Ligilactobacillus</taxon>
    </lineage>
</organism>
<gene>
    <name evidence="1" type="primary">rsmG</name>
    <name type="ordered locus">LSL_1599</name>
</gene>
<keyword id="KW-0963">Cytoplasm</keyword>
<keyword id="KW-0489">Methyltransferase</keyword>
<keyword id="KW-1185">Reference proteome</keyword>
<keyword id="KW-0698">rRNA processing</keyword>
<keyword id="KW-0949">S-adenosyl-L-methionine</keyword>
<keyword id="KW-0808">Transferase</keyword>
<evidence type="ECO:0000255" key="1">
    <source>
        <dbReference type="HAMAP-Rule" id="MF_00074"/>
    </source>
</evidence>
<dbReference type="EC" id="2.1.1.-" evidence="1"/>
<dbReference type="EMBL" id="CP000233">
    <property type="protein sequence ID" value="ABE00401.1"/>
    <property type="molecule type" value="Genomic_DNA"/>
</dbReference>
<dbReference type="RefSeq" id="WP_011476459.1">
    <property type="nucleotide sequence ID" value="NC_007929.1"/>
</dbReference>
<dbReference type="RefSeq" id="YP_536484.1">
    <property type="nucleotide sequence ID" value="NC_007929.1"/>
</dbReference>
<dbReference type="SMR" id="Q1WRS8"/>
<dbReference type="STRING" id="362948.LSL_1599"/>
<dbReference type="KEGG" id="lsl:LSL_1599"/>
<dbReference type="PATRIC" id="fig|362948.14.peg.1694"/>
<dbReference type="HOGENOM" id="CLU_065341_0_2_9"/>
<dbReference type="OrthoDB" id="9808773at2"/>
<dbReference type="Proteomes" id="UP000006559">
    <property type="component" value="Chromosome"/>
</dbReference>
<dbReference type="GO" id="GO:0005829">
    <property type="term" value="C:cytosol"/>
    <property type="evidence" value="ECO:0007669"/>
    <property type="project" value="TreeGrafter"/>
</dbReference>
<dbReference type="GO" id="GO:0070043">
    <property type="term" value="F:rRNA (guanine-N7-)-methyltransferase activity"/>
    <property type="evidence" value="ECO:0007669"/>
    <property type="project" value="UniProtKB-UniRule"/>
</dbReference>
<dbReference type="CDD" id="cd02440">
    <property type="entry name" value="AdoMet_MTases"/>
    <property type="match status" value="1"/>
</dbReference>
<dbReference type="FunFam" id="3.40.50.150:FF:000041">
    <property type="entry name" value="Ribosomal RNA small subunit methyltransferase G"/>
    <property type="match status" value="1"/>
</dbReference>
<dbReference type="Gene3D" id="3.40.50.150">
    <property type="entry name" value="Vaccinia Virus protein VP39"/>
    <property type="match status" value="1"/>
</dbReference>
<dbReference type="HAMAP" id="MF_00074">
    <property type="entry name" value="16SrRNA_methyltr_G"/>
    <property type="match status" value="1"/>
</dbReference>
<dbReference type="InterPro" id="IPR003682">
    <property type="entry name" value="rRNA_ssu_MeTfrase_G"/>
</dbReference>
<dbReference type="InterPro" id="IPR029063">
    <property type="entry name" value="SAM-dependent_MTases_sf"/>
</dbReference>
<dbReference type="NCBIfam" id="TIGR00138">
    <property type="entry name" value="rsmG_gidB"/>
    <property type="match status" value="1"/>
</dbReference>
<dbReference type="PANTHER" id="PTHR31760">
    <property type="entry name" value="S-ADENOSYL-L-METHIONINE-DEPENDENT METHYLTRANSFERASES SUPERFAMILY PROTEIN"/>
    <property type="match status" value="1"/>
</dbReference>
<dbReference type="PANTHER" id="PTHR31760:SF0">
    <property type="entry name" value="S-ADENOSYL-L-METHIONINE-DEPENDENT METHYLTRANSFERASES SUPERFAMILY PROTEIN"/>
    <property type="match status" value="1"/>
</dbReference>
<dbReference type="Pfam" id="PF02527">
    <property type="entry name" value="GidB"/>
    <property type="match status" value="1"/>
</dbReference>
<dbReference type="PIRSF" id="PIRSF003078">
    <property type="entry name" value="GidB"/>
    <property type="match status" value="1"/>
</dbReference>
<dbReference type="SUPFAM" id="SSF53335">
    <property type="entry name" value="S-adenosyl-L-methionine-dependent methyltransferases"/>
    <property type="match status" value="1"/>
</dbReference>
<sequence length="241" mass="27200">MTPEEFRQSLAGQGLNLTDEQMQQFELYYEFLVETNKNLNLTAITEKNEVYLKHFYDSLLLALTVKDLQTEELSLCDVGAGAGFPSLPVKIAFPQLKITIVDSLNKRIKFLQELTQKLNLQDVHFHHARAEEFGGKRSVHRERYDLVTARAVARMSVLSELCLPLAKVGGRFIALKAQKSDEELKNAQKAIEVLGGKVIADYATELPQVHDERHIIVVAKEKETPKKYPRKAGTPAKSPIE</sequence>
<feature type="chain" id="PRO_1000010163" description="Ribosomal RNA small subunit methyltransferase G">
    <location>
        <begin position="1"/>
        <end position="241"/>
    </location>
</feature>
<feature type="binding site" evidence="1">
    <location>
        <position position="79"/>
    </location>
    <ligand>
        <name>S-adenosyl-L-methionine</name>
        <dbReference type="ChEBI" id="CHEBI:59789"/>
    </ligand>
</feature>
<feature type="binding site" evidence="1">
    <location>
        <position position="84"/>
    </location>
    <ligand>
        <name>S-adenosyl-L-methionine</name>
        <dbReference type="ChEBI" id="CHEBI:59789"/>
    </ligand>
</feature>
<feature type="binding site" evidence="1">
    <location>
        <begin position="130"/>
        <end position="131"/>
    </location>
    <ligand>
        <name>S-adenosyl-L-methionine</name>
        <dbReference type="ChEBI" id="CHEBI:59789"/>
    </ligand>
</feature>
<feature type="binding site" evidence="1">
    <location>
        <position position="150"/>
    </location>
    <ligand>
        <name>S-adenosyl-L-methionine</name>
        <dbReference type="ChEBI" id="CHEBI:59789"/>
    </ligand>
</feature>
<name>RSMG_LIGS1</name>
<accession>Q1WRS8</accession>